<name>PPE54_MYCTU</name>
<sequence>MSFVVMPPEINSLLIYTGAGPGPLLAAAAAWDELAAELGSAAAAFGSVTSGLVGGIWQGPSSVAMAAAAAPYAGWLSAAAASAESAAGQARAVVGVFEAALAETVDPFVIAANRSRLVSLALSNLFGQNTPAIAAAEFDYELMWAQDVAAMLGYHTGASAAAEALAPFGSPLASLAAAAEPAKSLAVNLGLANVGLFNAGSGNVGSYNVGAGNVGSYNVGGGNIGGNNVGLGNVGWGNFGLGNSGLTPGLMGLGNIGFGNAGSYNFGLANMGVGNIGFANTGSGNFGIGLTGDNLTGFGGFNTGSGNVGLFNSGTGNVGFFNSGTGNWGVFNSGSYNTGIGNSGIASTGLFNAGGFNTGVVNAGSYNTGSFNAGEANTGGFNPGSVNTGWLNTGDINTGVANSGDVNTGAFISGNYSNGVLWRGDYQGLLGFSSGANVLPVIPLSLDINGGVGAITIEPIHILPDIPININETLYLGPLVVPPINVPAISLGVGIPNISIGPIKINPITLWPAQNFNQTITLAWPVSSITIPQIQQVALSPSPIPTTLIGPIHINTGFSIPVTFSYSTPALTLFPVGLSIPTGGPLTLTLGVTAGTEAFTIPGFSIPEQPLPLAINVIGHINALSTPAITIDNIPLNLHAIGGVGPVDIVGGNVPASPGFGNSTTAPSSGFFNTGAGGVSGFGNVGAHTSGWFNQSTQAMQVLPGTVSGYFNSGTLMSGIGNVGTQLSGMLSGGALGGNNFGLGNIGFDNVGFGNAGSSNFGLANMGIGNIGLANTGNGNIGIGLSGDNLTGFGGFNSGSENVGLFNSGTGNVGFFNSGTGNLGVFNSGSHNTGFFLTGNNINVLAPFTPGTLFTISEIPIDLQVIGGIGPIHVQPIDIPAFDIQITGGFIGIREFTLPEITIPAIPIHVTGTVGLEGFHVNPAFVLFGQTAMAEITADPVVLPDPFITIDHYGPPLGPPGAKFPSGSFYLSISDLQINGPIIGSYGGPGTIPGPFGATFNLSTSSLALFPAGLTVPDQTPVTVNLTGGLDSITLFPGGLAFPENPVVSLTNFSVGTGGFTVFPQGFTVDRIPVDLHTTLSIGPFPFRWDYIPPTPANGPIPAVPGGFGLTSGLFPFHFTLNGGIGPISIPTTTVVDALNPLLTVTGNLEVGPFTVPDIPIPAINFGLDGNVNVSFNAPATTLLSGLGITGSIDISGIQITNIQTQPAQLFMSVGQTLFLFDFRDGIELNPIVIPGSSIPITMAGLSIPLPTVSESIPLNFSFGSPASTVKSMILHEILPIDVSINLEDAVFIPATVLPAIPLNVDVTIPVGPINIPIITEPGSGNSTTTTSDPFSGLAVPGLGVGLLGLFDGSIANNLISGFNSAVGIVGPNVGLSNLGGGNVGLGNVGDFNLGAGNVGGFNVGGGNIGGNNVGLGNVGFGNVGLANSGLTPGLMGLGNIGFGNAGSYNFGLANMGVGNIGFANTGSGNFGIGLTGDNLTGFGGFNTGSGNVGLFNSGTGNVGFFNSGTGNWGVFNSGSYNTGIGNSGIASTGLFNAGGFNTGVVNAGSYNTGSFNAGQANTGGFNPGSVNTGWLNTGDINTGVANSGDVNTGAFISGNYSNGAFWRGDYQGLLGFSYRPAVLPQTPFLDLTLTGGLGSVVIPAIDIPAIRPEFSANVAIDSFTVPSIPIPQIDLAATTVSVGLGPITVPHLDIPRVPVTLNYLFGSQPGGPLKIGPITGLFNTPIGLTPLALSQIVIGASSSQGTITAFLANLPFSTPVVTIDEIPLLASITGHSEPVDIFPGGLTIPAMNPLSINLSGGTGAVTIPAITIGEIPFDLVAHSTLGPVHILIDLPAVPGFGNTTGAPSSGFFNSGAGGVSGFGNVGAMVSGGWNQAPSALLGGGSGVFNAGTLHSGVLNFGSGMSGLFNTSVLGLGAPALVSGLGSVGQQLSGLLASGTALHQGLVLNFGLADVGLGNVGLGNVGDFNLGAGNVGGFNVGGGNIGGNNVGLGNVGWGNFGLGNSGLTPGLMGLGNIGFGNAGSYNFGLANMGVGNIGFANTGSGNFGIGLTGDNLTGFGGFNTGSGNVGLFNSGTGNVGFFNSGTGNWGVFNSGSYNTGIGNSGIASTGLFNAGGFNTGVVNAGSYNTGSFNAGQANTGGFNPGSVNTGWLNTGDINTGVANSGDVNTGAFISGNYSNGAFWRGDYQGLLGFSYTSTIIPEFTVANIHASGGAGPIIVPSIQFPAIPLDLSATGHIGGFTIPPVSISPITVRIDPVFDLGPITVQDITIPALGLDPATGVTVGPIFSSGSIIDPFSLTLLGFINVNVPAIQTAPSEILPFTVLLSSLGVTHLTPEITIPGFHIPVDPIHVELPLSVTIGPFVSPEITIPQLPLGLALSGATPAFAFPLEITIDRIPVVLDVNALLGPINAGLVIPPVPGFGNTTAVPSSGFFNIGGGGGLSGFHNLGAGMSGVLNAISDPLLGSASGFANFGTQLSGILNRGADISGVYNTGALGLITSALVSGFGNVGQQLAGLIYTGTGP</sequence>
<accession>Q6MWY2</accession>
<accession>L0TCH9</accession>
<comment type="function">
    <text evidence="3">Probably plays a role in host phagosome maturation arrest (PubMed:20844580).</text>
</comment>
<comment type="disruption phenotype">
    <text evidence="1">Grows normally in liquid culture, traffics into host (human and mouse) acidified compartments early after phagocytosis, suggesting it no longer arrests phagosome maturation as well as wild-type, impaired growth in mouse macrophages (PubMed:20844580).</text>
</comment>
<comment type="miscellaneous">
    <text>Was identified as a high-confidence drug target.</text>
</comment>
<comment type="similarity">
    <text evidence="2">Belongs to the mycobacterial PPE family.</text>
</comment>
<proteinExistence type="inferred from homology"/>
<gene>
    <name type="primary">PPE54</name>
    <name type="ordered locus">Rv3343c</name>
</gene>
<reference key="1">
    <citation type="journal article" date="1998" name="Nature">
        <title>Deciphering the biology of Mycobacterium tuberculosis from the complete genome sequence.</title>
        <authorList>
            <person name="Cole S.T."/>
            <person name="Brosch R."/>
            <person name="Parkhill J."/>
            <person name="Garnier T."/>
            <person name="Churcher C.M."/>
            <person name="Harris D.E."/>
            <person name="Gordon S.V."/>
            <person name="Eiglmeier K."/>
            <person name="Gas S."/>
            <person name="Barry C.E. III"/>
            <person name="Tekaia F."/>
            <person name="Badcock K."/>
            <person name="Basham D."/>
            <person name="Brown D."/>
            <person name="Chillingworth T."/>
            <person name="Connor R."/>
            <person name="Davies R.M."/>
            <person name="Devlin K."/>
            <person name="Feltwell T."/>
            <person name="Gentles S."/>
            <person name="Hamlin N."/>
            <person name="Holroyd S."/>
            <person name="Hornsby T."/>
            <person name="Jagels K."/>
            <person name="Krogh A."/>
            <person name="McLean J."/>
            <person name="Moule S."/>
            <person name="Murphy L.D."/>
            <person name="Oliver S."/>
            <person name="Osborne J."/>
            <person name="Quail M.A."/>
            <person name="Rajandream M.A."/>
            <person name="Rogers J."/>
            <person name="Rutter S."/>
            <person name="Seeger K."/>
            <person name="Skelton S."/>
            <person name="Squares S."/>
            <person name="Squares R."/>
            <person name="Sulston J.E."/>
            <person name="Taylor K."/>
            <person name="Whitehead S."/>
            <person name="Barrell B.G."/>
        </authorList>
    </citation>
    <scope>NUCLEOTIDE SEQUENCE [LARGE SCALE GENOMIC DNA]</scope>
    <source>
        <strain>ATCC 25618 / H37Rv</strain>
    </source>
</reference>
<reference key="2">
    <citation type="journal article" date="2008" name="BMC Syst. Biol.">
        <title>targetTB: a target identification pipeline for Mycobacterium tuberculosis through an interactome, reactome and genome-scale structural analysis.</title>
        <authorList>
            <person name="Raman K."/>
            <person name="Yeturu K."/>
            <person name="Chandra N."/>
        </authorList>
    </citation>
    <scope>IDENTIFICATION AS A DRUG TARGET [LARGE SCALE ANALYSIS]</scope>
</reference>
<reference key="3">
    <citation type="journal article" date="2010" name="PLoS Pathog.">
        <title>High content phenotypic cell-based visual screen identifies Mycobacterium tuberculosis acyltrehalose-containing glycolipids involved in phagosome remodeling.</title>
        <authorList>
            <person name="Brodin P."/>
            <person name="Poquet Y."/>
            <person name="Levillain F."/>
            <person name="Peguillet I."/>
            <person name="Larrouy-Maumus G."/>
            <person name="Gilleron M."/>
            <person name="Ewann F."/>
            <person name="Christophe T."/>
            <person name="Fenistein D."/>
            <person name="Jang J."/>
            <person name="Jang M.S."/>
            <person name="Park S.J."/>
            <person name="Rauzier J."/>
            <person name="Carralot J.P."/>
            <person name="Shrimpton R."/>
            <person name="Genovesio A."/>
            <person name="Gonzalo-Asensio J.A."/>
            <person name="Puzo G."/>
            <person name="Martin C."/>
            <person name="Brosch R."/>
            <person name="Stewart G.R."/>
            <person name="Gicquel B."/>
            <person name="Neyrolles O."/>
        </authorList>
    </citation>
    <scope>FUNCTION</scope>
    <scope>DISRUPTION PHENOTYPE</scope>
    <source>
        <strain>Beijing GC1237</strain>
    </source>
</reference>
<evidence type="ECO:0000269" key="1">
    <source>
    </source>
</evidence>
<evidence type="ECO:0000305" key="2"/>
<evidence type="ECO:0000305" key="3">
    <source>
    </source>
</evidence>
<dbReference type="EMBL" id="AL123456">
    <property type="protein sequence ID" value="CCP46164.1"/>
    <property type="molecule type" value="Genomic_DNA"/>
</dbReference>
<dbReference type="PIR" id="F70846">
    <property type="entry name" value="F70846"/>
</dbReference>
<dbReference type="RefSeq" id="WP_010886163.1">
    <property type="nucleotide sequence ID" value="NC_018143.2"/>
</dbReference>
<dbReference type="RefSeq" id="YP_177960.1">
    <property type="nucleotide sequence ID" value="NC_000962.3"/>
</dbReference>
<dbReference type="STRING" id="83332.Rv3343c"/>
<dbReference type="PaxDb" id="83332-Rv3343c"/>
<dbReference type="GeneID" id="888033"/>
<dbReference type="KEGG" id="mtu:Rv3343c"/>
<dbReference type="KEGG" id="mtv:RVBD_3343c"/>
<dbReference type="TubercuList" id="Rv3343c"/>
<dbReference type="eggNOG" id="COG5651">
    <property type="taxonomic scope" value="Bacteria"/>
</dbReference>
<dbReference type="InParanoid" id="Q6MWY2"/>
<dbReference type="OrthoDB" id="4645895at2"/>
<dbReference type="PhylomeDB" id="Q6MWY2"/>
<dbReference type="Proteomes" id="UP000001584">
    <property type="component" value="Chromosome"/>
</dbReference>
<dbReference type="GO" id="GO:0052572">
    <property type="term" value="P:response to host immune response"/>
    <property type="evidence" value="ECO:0000318"/>
    <property type="project" value="GO_Central"/>
</dbReference>
<dbReference type="GO" id="GO:0052170">
    <property type="term" value="P:symbiont-mediated suppression of host innate immune response"/>
    <property type="evidence" value="ECO:0000314"/>
    <property type="project" value="MTBBASE"/>
</dbReference>
<dbReference type="FunFam" id="1.20.1260.20:FF:000001">
    <property type="entry name" value="PPE family protein PPE41"/>
    <property type="match status" value="1"/>
</dbReference>
<dbReference type="Gene3D" id="1.20.1260.20">
    <property type="entry name" value="PPE superfamily"/>
    <property type="match status" value="1"/>
</dbReference>
<dbReference type="InterPro" id="IPR002989">
    <property type="entry name" value="Mycobac_pentapep"/>
</dbReference>
<dbReference type="InterPro" id="IPR000030">
    <property type="entry name" value="PPE_dom"/>
</dbReference>
<dbReference type="InterPro" id="IPR038332">
    <property type="entry name" value="PPE_sf"/>
</dbReference>
<dbReference type="PANTHER" id="PTHR46766">
    <property type="entry name" value="GLUTAMINE-RICH PROTEIN 2"/>
    <property type="match status" value="1"/>
</dbReference>
<dbReference type="PANTHER" id="PTHR46766:SF1">
    <property type="entry name" value="GLUTAMINE-RICH PROTEIN 2"/>
    <property type="match status" value="1"/>
</dbReference>
<dbReference type="Pfam" id="PF01469">
    <property type="entry name" value="Pentapeptide_2"/>
    <property type="match status" value="15"/>
</dbReference>
<dbReference type="Pfam" id="PF00823">
    <property type="entry name" value="PPE"/>
    <property type="match status" value="1"/>
</dbReference>
<dbReference type="SUPFAM" id="SSF140459">
    <property type="entry name" value="PE/PPE dimer-like"/>
    <property type="match status" value="1"/>
</dbReference>
<protein>
    <recommendedName>
        <fullName>Uncharacterized PPE family protein PPE54</fullName>
    </recommendedName>
</protein>
<organism>
    <name type="scientific">Mycobacterium tuberculosis (strain ATCC 25618 / H37Rv)</name>
    <dbReference type="NCBI Taxonomy" id="83332"/>
    <lineage>
        <taxon>Bacteria</taxon>
        <taxon>Bacillati</taxon>
        <taxon>Actinomycetota</taxon>
        <taxon>Actinomycetes</taxon>
        <taxon>Mycobacteriales</taxon>
        <taxon>Mycobacteriaceae</taxon>
        <taxon>Mycobacterium</taxon>
        <taxon>Mycobacterium tuberculosis complex</taxon>
    </lineage>
</organism>
<keyword id="KW-1185">Reference proteome</keyword>
<feature type="chain" id="PRO_0000378486" description="Uncharacterized PPE family protein PPE54">
    <location>
        <begin position="1"/>
        <end position="2523"/>
    </location>
</feature>